<organism>
    <name type="scientific">Parabacteroides distasonis (strain ATCC 8503 / DSM 20701 / CIP 104284 / JCM 5825 / NCTC 11152)</name>
    <dbReference type="NCBI Taxonomy" id="435591"/>
    <lineage>
        <taxon>Bacteria</taxon>
        <taxon>Pseudomonadati</taxon>
        <taxon>Bacteroidota</taxon>
        <taxon>Bacteroidia</taxon>
        <taxon>Bacteroidales</taxon>
        <taxon>Tannerellaceae</taxon>
        <taxon>Parabacteroides</taxon>
    </lineage>
</organism>
<name>ATPF_PARD8</name>
<dbReference type="EMBL" id="CP000140">
    <property type="protein sequence ID" value="ABR42051.1"/>
    <property type="molecule type" value="Genomic_DNA"/>
</dbReference>
<dbReference type="RefSeq" id="WP_005861790.1">
    <property type="nucleotide sequence ID" value="NZ_LR215978.1"/>
</dbReference>
<dbReference type="SMR" id="A6L8N7"/>
<dbReference type="STRING" id="435591.BDI_0266"/>
<dbReference type="PaxDb" id="435591-BDI_0266"/>
<dbReference type="GeneID" id="93524427"/>
<dbReference type="KEGG" id="pdi:BDI_0266"/>
<dbReference type="eggNOG" id="COG0711">
    <property type="taxonomic scope" value="Bacteria"/>
</dbReference>
<dbReference type="HOGENOM" id="CLU_079215_4_1_10"/>
<dbReference type="BioCyc" id="PDIS435591:G1G5A-272-MONOMER"/>
<dbReference type="Proteomes" id="UP000000566">
    <property type="component" value="Chromosome"/>
</dbReference>
<dbReference type="GO" id="GO:0005886">
    <property type="term" value="C:plasma membrane"/>
    <property type="evidence" value="ECO:0007669"/>
    <property type="project" value="UniProtKB-SubCell"/>
</dbReference>
<dbReference type="GO" id="GO:0045259">
    <property type="term" value="C:proton-transporting ATP synthase complex"/>
    <property type="evidence" value="ECO:0007669"/>
    <property type="project" value="UniProtKB-KW"/>
</dbReference>
<dbReference type="GO" id="GO:0046933">
    <property type="term" value="F:proton-transporting ATP synthase activity, rotational mechanism"/>
    <property type="evidence" value="ECO:0007669"/>
    <property type="project" value="UniProtKB-UniRule"/>
</dbReference>
<dbReference type="GO" id="GO:0046961">
    <property type="term" value="F:proton-transporting ATPase activity, rotational mechanism"/>
    <property type="evidence" value="ECO:0007669"/>
    <property type="project" value="TreeGrafter"/>
</dbReference>
<dbReference type="CDD" id="cd06503">
    <property type="entry name" value="ATP-synt_Fo_b"/>
    <property type="match status" value="1"/>
</dbReference>
<dbReference type="HAMAP" id="MF_01398">
    <property type="entry name" value="ATP_synth_b_bprime"/>
    <property type="match status" value="1"/>
</dbReference>
<dbReference type="InterPro" id="IPR028987">
    <property type="entry name" value="ATP_synth_B-like_membr_sf"/>
</dbReference>
<dbReference type="InterPro" id="IPR002146">
    <property type="entry name" value="ATP_synth_b/b'su_bac/chlpt"/>
</dbReference>
<dbReference type="InterPro" id="IPR005864">
    <property type="entry name" value="ATP_synth_F0_bsu_bac"/>
</dbReference>
<dbReference type="InterPro" id="IPR050059">
    <property type="entry name" value="ATP_synthase_B_chain"/>
</dbReference>
<dbReference type="NCBIfam" id="TIGR01144">
    <property type="entry name" value="ATP_synt_b"/>
    <property type="match status" value="1"/>
</dbReference>
<dbReference type="PANTHER" id="PTHR33445:SF1">
    <property type="entry name" value="ATP SYNTHASE SUBUNIT B"/>
    <property type="match status" value="1"/>
</dbReference>
<dbReference type="PANTHER" id="PTHR33445">
    <property type="entry name" value="ATP SYNTHASE SUBUNIT B', CHLOROPLASTIC"/>
    <property type="match status" value="1"/>
</dbReference>
<dbReference type="Pfam" id="PF00430">
    <property type="entry name" value="ATP-synt_B"/>
    <property type="match status" value="1"/>
</dbReference>
<dbReference type="SUPFAM" id="SSF81573">
    <property type="entry name" value="F1F0 ATP synthase subunit B, membrane domain"/>
    <property type="match status" value="1"/>
</dbReference>
<protein>
    <recommendedName>
        <fullName evidence="1">ATP synthase subunit b</fullName>
    </recommendedName>
    <alternativeName>
        <fullName evidence="1">ATP synthase F(0) sector subunit b</fullName>
    </alternativeName>
    <alternativeName>
        <fullName evidence="1">ATPase subunit I</fullName>
    </alternativeName>
    <alternativeName>
        <fullName evidence="1">F-type ATPase subunit b</fullName>
        <shortName evidence="1">F-ATPase subunit b</shortName>
    </alternativeName>
</protein>
<keyword id="KW-0066">ATP synthesis</keyword>
<keyword id="KW-0997">Cell inner membrane</keyword>
<keyword id="KW-1003">Cell membrane</keyword>
<keyword id="KW-0138">CF(0)</keyword>
<keyword id="KW-0375">Hydrogen ion transport</keyword>
<keyword id="KW-0406">Ion transport</keyword>
<keyword id="KW-0472">Membrane</keyword>
<keyword id="KW-1185">Reference proteome</keyword>
<keyword id="KW-0812">Transmembrane</keyword>
<keyword id="KW-1133">Transmembrane helix</keyword>
<keyword id="KW-0813">Transport</keyword>
<feature type="chain" id="PRO_0000368642" description="ATP synthase subunit b">
    <location>
        <begin position="1"/>
        <end position="166"/>
    </location>
</feature>
<feature type="transmembrane region" description="Helical" evidence="1">
    <location>
        <begin position="10"/>
        <end position="30"/>
    </location>
</feature>
<evidence type="ECO:0000255" key="1">
    <source>
        <dbReference type="HAMAP-Rule" id="MF_01398"/>
    </source>
</evidence>
<gene>
    <name evidence="1" type="primary">atpF</name>
    <name type="ordered locus">BDI_0266</name>
</gene>
<proteinExistence type="inferred from homology"/>
<sequence length="166" mass="19031">MSLLTPDSGLLFWMIVSFGIVFVILSKYGFPVIVKAIEQRKAYIDNSLETARQANERLAHIQAEGEKMLAEAKEKQNAVLKEAFAEKERIIEEARKKAVSEAHLQIEEATRRIREEKEKAIREVRSEIADLSIAIAEKVMKEKIGRDKEQQQMIDRLLDEVSFSKS</sequence>
<comment type="function">
    <text evidence="1">F(1)F(0) ATP synthase produces ATP from ADP in the presence of a proton or sodium gradient. F-type ATPases consist of two structural domains, F(1) containing the extramembraneous catalytic core and F(0) containing the membrane proton channel, linked together by a central stalk and a peripheral stalk. During catalysis, ATP synthesis in the catalytic domain of F(1) is coupled via a rotary mechanism of the central stalk subunits to proton translocation.</text>
</comment>
<comment type="function">
    <text evidence="1">Component of the F(0) channel, it forms part of the peripheral stalk, linking F(1) to F(0).</text>
</comment>
<comment type="subunit">
    <text evidence="1">F-type ATPases have 2 components, F(1) - the catalytic core - and F(0) - the membrane proton channel. F(1) has five subunits: alpha(3), beta(3), gamma(1), delta(1), epsilon(1). F(0) has three main subunits: a(1), b(2) and c(10-14). The alpha and beta chains form an alternating ring which encloses part of the gamma chain. F(1) is attached to F(0) by a central stalk formed by the gamma and epsilon chains, while a peripheral stalk is formed by the delta and b chains.</text>
</comment>
<comment type="subcellular location">
    <subcellularLocation>
        <location evidence="1">Cell inner membrane</location>
        <topology evidence="1">Single-pass membrane protein</topology>
    </subcellularLocation>
</comment>
<comment type="similarity">
    <text evidence="1">Belongs to the ATPase B chain family.</text>
</comment>
<accession>A6L8N7</accession>
<reference key="1">
    <citation type="journal article" date="2007" name="PLoS Biol.">
        <title>Evolution of symbiotic bacteria in the distal human intestine.</title>
        <authorList>
            <person name="Xu J."/>
            <person name="Mahowald M.A."/>
            <person name="Ley R.E."/>
            <person name="Lozupone C.A."/>
            <person name="Hamady M."/>
            <person name="Martens E.C."/>
            <person name="Henrissat B."/>
            <person name="Coutinho P.M."/>
            <person name="Minx P."/>
            <person name="Latreille P."/>
            <person name="Cordum H."/>
            <person name="Van Brunt A."/>
            <person name="Kim K."/>
            <person name="Fulton R.S."/>
            <person name="Fulton L.A."/>
            <person name="Clifton S.W."/>
            <person name="Wilson R.K."/>
            <person name="Knight R.D."/>
            <person name="Gordon J.I."/>
        </authorList>
    </citation>
    <scope>NUCLEOTIDE SEQUENCE [LARGE SCALE GENOMIC DNA]</scope>
    <source>
        <strain>ATCC 8503 / DSM 20701 / CIP 104284 / JCM 5825 / NCTC 11152</strain>
    </source>
</reference>